<keyword id="KW-0028">Amino-acid biosynthesis</keyword>
<keyword id="KW-0963">Cytoplasm</keyword>
<keyword id="KW-0554">One-carbon metabolism</keyword>
<keyword id="KW-0663">Pyridoxal phosphate</keyword>
<keyword id="KW-0808">Transferase</keyword>
<accession>Q15WB3</accession>
<feature type="chain" id="PRO_1000006298" description="Serine hydroxymethyltransferase">
    <location>
        <begin position="1"/>
        <end position="418"/>
    </location>
</feature>
<feature type="binding site" evidence="1">
    <location>
        <position position="121"/>
    </location>
    <ligand>
        <name>(6S)-5,6,7,8-tetrahydrofolate</name>
        <dbReference type="ChEBI" id="CHEBI:57453"/>
    </ligand>
</feature>
<feature type="binding site" evidence="1">
    <location>
        <begin position="125"/>
        <end position="127"/>
    </location>
    <ligand>
        <name>(6S)-5,6,7,8-tetrahydrofolate</name>
        <dbReference type="ChEBI" id="CHEBI:57453"/>
    </ligand>
</feature>
<feature type="binding site" evidence="1">
    <location>
        <begin position="356"/>
        <end position="358"/>
    </location>
    <ligand>
        <name>(6S)-5,6,7,8-tetrahydrofolate</name>
        <dbReference type="ChEBI" id="CHEBI:57453"/>
    </ligand>
</feature>
<feature type="site" description="Plays an important role in substrate specificity" evidence="1">
    <location>
        <position position="229"/>
    </location>
</feature>
<feature type="modified residue" description="N6-(pyridoxal phosphate)lysine" evidence="1">
    <location>
        <position position="230"/>
    </location>
</feature>
<dbReference type="EC" id="2.1.2.1" evidence="1"/>
<dbReference type="EMBL" id="CP000388">
    <property type="protein sequence ID" value="ABG39825.1"/>
    <property type="molecule type" value="Genomic_DNA"/>
</dbReference>
<dbReference type="RefSeq" id="WP_011574149.1">
    <property type="nucleotide sequence ID" value="NC_008228.1"/>
</dbReference>
<dbReference type="SMR" id="Q15WB3"/>
<dbReference type="STRING" id="342610.Patl_1299"/>
<dbReference type="KEGG" id="pat:Patl_1299"/>
<dbReference type="eggNOG" id="COG0112">
    <property type="taxonomic scope" value="Bacteria"/>
</dbReference>
<dbReference type="HOGENOM" id="CLU_022477_2_1_6"/>
<dbReference type="OrthoDB" id="9803846at2"/>
<dbReference type="UniPathway" id="UPA00193"/>
<dbReference type="UniPathway" id="UPA00288">
    <property type="reaction ID" value="UER01023"/>
</dbReference>
<dbReference type="Proteomes" id="UP000001981">
    <property type="component" value="Chromosome"/>
</dbReference>
<dbReference type="GO" id="GO:0005829">
    <property type="term" value="C:cytosol"/>
    <property type="evidence" value="ECO:0007669"/>
    <property type="project" value="TreeGrafter"/>
</dbReference>
<dbReference type="GO" id="GO:0004372">
    <property type="term" value="F:glycine hydroxymethyltransferase activity"/>
    <property type="evidence" value="ECO:0007669"/>
    <property type="project" value="UniProtKB-UniRule"/>
</dbReference>
<dbReference type="GO" id="GO:0030170">
    <property type="term" value="F:pyridoxal phosphate binding"/>
    <property type="evidence" value="ECO:0007669"/>
    <property type="project" value="UniProtKB-UniRule"/>
</dbReference>
<dbReference type="GO" id="GO:0019264">
    <property type="term" value="P:glycine biosynthetic process from serine"/>
    <property type="evidence" value="ECO:0007669"/>
    <property type="project" value="UniProtKB-UniRule"/>
</dbReference>
<dbReference type="GO" id="GO:0035999">
    <property type="term" value="P:tetrahydrofolate interconversion"/>
    <property type="evidence" value="ECO:0007669"/>
    <property type="project" value="UniProtKB-UniRule"/>
</dbReference>
<dbReference type="CDD" id="cd00378">
    <property type="entry name" value="SHMT"/>
    <property type="match status" value="1"/>
</dbReference>
<dbReference type="FunFam" id="3.40.640.10:FF:000001">
    <property type="entry name" value="Serine hydroxymethyltransferase"/>
    <property type="match status" value="1"/>
</dbReference>
<dbReference type="FunFam" id="3.90.1150.10:FF:000003">
    <property type="entry name" value="Serine hydroxymethyltransferase"/>
    <property type="match status" value="1"/>
</dbReference>
<dbReference type="Gene3D" id="3.90.1150.10">
    <property type="entry name" value="Aspartate Aminotransferase, domain 1"/>
    <property type="match status" value="1"/>
</dbReference>
<dbReference type="Gene3D" id="3.40.640.10">
    <property type="entry name" value="Type I PLP-dependent aspartate aminotransferase-like (Major domain)"/>
    <property type="match status" value="1"/>
</dbReference>
<dbReference type="HAMAP" id="MF_00051">
    <property type="entry name" value="SHMT"/>
    <property type="match status" value="1"/>
</dbReference>
<dbReference type="InterPro" id="IPR015424">
    <property type="entry name" value="PyrdxlP-dep_Trfase"/>
</dbReference>
<dbReference type="InterPro" id="IPR015421">
    <property type="entry name" value="PyrdxlP-dep_Trfase_major"/>
</dbReference>
<dbReference type="InterPro" id="IPR015422">
    <property type="entry name" value="PyrdxlP-dep_Trfase_small"/>
</dbReference>
<dbReference type="InterPro" id="IPR001085">
    <property type="entry name" value="Ser_HO-MeTrfase"/>
</dbReference>
<dbReference type="InterPro" id="IPR049943">
    <property type="entry name" value="Ser_HO-MeTrfase-like"/>
</dbReference>
<dbReference type="InterPro" id="IPR019798">
    <property type="entry name" value="Ser_HO-MeTrfase_PLP_BS"/>
</dbReference>
<dbReference type="InterPro" id="IPR039429">
    <property type="entry name" value="SHMT-like_dom"/>
</dbReference>
<dbReference type="NCBIfam" id="NF000586">
    <property type="entry name" value="PRK00011.1"/>
    <property type="match status" value="1"/>
</dbReference>
<dbReference type="PANTHER" id="PTHR11680">
    <property type="entry name" value="SERINE HYDROXYMETHYLTRANSFERASE"/>
    <property type="match status" value="1"/>
</dbReference>
<dbReference type="PANTHER" id="PTHR11680:SF50">
    <property type="entry name" value="SERINE HYDROXYMETHYLTRANSFERASE"/>
    <property type="match status" value="1"/>
</dbReference>
<dbReference type="Pfam" id="PF00464">
    <property type="entry name" value="SHMT"/>
    <property type="match status" value="1"/>
</dbReference>
<dbReference type="PIRSF" id="PIRSF000412">
    <property type="entry name" value="SHMT"/>
    <property type="match status" value="1"/>
</dbReference>
<dbReference type="SUPFAM" id="SSF53383">
    <property type="entry name" value="PLP-dependent transferases"/>
    <property type="match status" value="1"/>
</dbReference>
<dbReference type="PROSITE" id="PS00096">
    <property type="entry name" value="SHMT"/>
    <property type="match status" value="1"/>
</dbReference>
<sequence length="418" mass="45240">MLSRDMNIADFDPELSQAIAQETQRQEDHIELIASENYCSPRVLEAQGSQLTNKYAEGYPHKRYYGGCEYVDIAEDLAIERANQLFGSDYANVQPHSGSQANSAVFMALLDAGDTVLGMSLAHGGHLTHGAHVSFSGKTYNAVQYGIDEQTGKIDYDVVEALAVEHKPKMIIGGFSAYSGIVDWQRFREIADKVGAYLLVDMAHVAGLVAAGLYPNPLPHAHVVTTTTHKTLAGPRGGLILSACGDEAIYKKLNSSVFPGNQGGPLCHVIAAKAVAFKEALQPDFKAYQQQVLLNAKAMVSVMQERGYDIVSGGTDNHLFLLDLISKDITGKDADAALGRANITVNKNSVPNDPRSPFVTSGLRIGSPAITRRGFKEEQAKQVATWICDVIDNIEDEAVIERVKGEVLTLCGKFPVYA</sequence>
<name>GLYA_PSEA6</name>
<comment type="function">
    <text evidence="1">Catalyzes the reversible interconversion of serine and glycine with tetrahydrofolate (THF) serving as the one-carbon carrier. This reaction serves as the major source of one-carbon groups required for the biosynthesis of purines, thymidylate, methionine, and other important biomolecules. Also exhibits THF-independent aldolase activity toward beta-hydroxyamino acids, producing glycine and aldehydes, via a retro-aldol mechanism.</text>
</comment>
<comment type="catalytic activity">
    <reaction evidence="1">
        <text>(6R)-5,10-methylene-5,6,7,8-tetrahydrofolate + glycine + H2O = (6S)-5,6,7,8-tetrahydrofolate + L-serine</text>
        <dbReference type="Rhea" id="RHEA:15481"/>
        <dbReference type="ChEBI" id="CHEBI:15377"/>
        <dbReference type="ChEBI" id="CHEBI:15636"/>
        <dbReference type="ChEBI" id="CHEBI:33384"/>
        <dbReference type="ChEBI" id="CHEBI:57305"/>
        <dbReference type="ChEBI" id="CHEBI:57453"/>
        <dbReference type="EC" id="2.1.2.1"/>
    </reaction>
</comment>
<comment type="cofactor">
    <cofactor evidence="1">
        <name>pyridoxal 5'-phosphate</name>
        <dbReference type="ChEBI" id="CHEBI:597326"/>
    </cofactor>
</comment>
<comment type="pathway">
    <text evidence="1">One-carbon metabolism; tetrahydrofolate interconversion.</text>
</comment>
<comment type="pathway">
    <text evidence="1">Amino-acid biosynthesis; glycine biosynthesis; glycine from L-serine: step 1/1.</text>
</comment>
<comment type="subunit">
    <text evidence="1">Homodimer.</text>
</comment>
<comment type="subcellular location">
    <subcellularLocation>
        <location evidence="1">Cytoplasm</location>
    </subcellularLocation>
</comment>
<comment type="similarity">
    <text evidence="1">Belongs to the SHMT family.</text>
</comment>
<organism>
    <name type="scientific">Pseudoalteromonas atlantica (strain T6c / ATCC BAA-1087)</name>
    <dbReference type="NCBI Taxonomy" id="3042615"/>
    <lineage>
        <taxon>Bacteria</taxon>
        <taxon>Pseudomonadati</taxon>
        <taxon>Pseudomonadota</taxon>
        <taxon>Gammaproteobacteria</taxon>
        <taxon>Alteromonadales</taxon>
        <taxon>Alteromonadaceae</taxon>
        <taxon>Paraglaciecola</taxon>
    </lineage>
</organism>
<protein>
    <recommendedName>
        <fullName evidence="1">Serine hydroxymethyltransferase</fullName>
        <shortName evidence="1">SHMT</shortName>
        <shortName evidence="1">Serine methylase</shortName>
        <ecNumber evidence="1">2.1.2.1</ecNumber>
    </recommendedName>
</protein>
<gene>
    <name evidence="1" type="primary">glyA</name>
    <name type="ordered locus">Patl_1299</name>
</gene>
<reference key="1">
    <citation type="submission" date="2006-06" db="EMBL/GenBank/DDBJ databases">
        <title>Complete sequence of Pseudoalteromonas atlantica T6c.</title>
        <authorList>
            <consortium name="US DOE Joint Genome Institute"/>
            <person name="Copeland A."/>
            <person name="Lucas S."/>
            <person name="Lapidus A."/>
            <person name="Barry K."/>
            <person name="Detter J.C."/>
            <person name="Glavina del Rio T."/>
            <person name="Hammon N."/>
            <person name="Israni S."/>
            <person name="Dalin E."/>
            <person name="Tice H."/>
            <person name="Pitluck S."/>
            <person name="Saunders E."/>
            <person name="Brettin T."/>
            <person name="Bruce D."/>
            <person name="Han C."/>
            <person name="Tapia R."/>
            <person name="Gilna P."/>
            <person name="Schmutz J."/>
            <person name="Larimer F."/>
            <person name="Land M."/>
            <person name="Hauser L."/>
            <person name="Kyrpides N."/>
            <person name="Kim E."/>
            <person name="Karls A.C."/>
            <person name="Bartlett D."/>
            <person name="Higgins B.P."/>
            <person name="Richardson P."/>
        </authorList>
    </citation>
    <scope>NUCLEOTIDE SEQUENCE [LARGE SCALE GENOMIC DNA]</scope>
    <source>
        <strain>T6c / ATCC BAA-1087</strain>
    </source>
</reference>
<evidence type="ECO:0000255" key="1">
    <source>
        <dbReference type="HAMAP-Rule" id="MF_00051"/>
    </source>
</evidence>
<proteinExistence type="inferred from homology"/>